<proteinExistence type="inferred from homology"/>
<reference key="1">
    <citation type="journal article" date="2003" name="Proc. Natl. Acad. Sci. U.S.A.">
        <title>The complete genome sequence of the carcinogenic bacterium Helicobacter hepaticus.</title>
        <authorList>
            <person name="Suerbaum S."/>
            <person name="Josenhans C."/>
            <person name="Sterzenbach T."/>
            <person name="Drescher B."/>
            <person name="Brandt P."/>
            <person name="Bell M."/>
            <person name="Droege M."/>
            <person name="Fartmann B."/>
            <person name="Fischer H.-P."/>
            <person name="Ge Z."/>
            <person name="Hoerster A."/>
            <person name="Holland R."/>
            <person name="Klein K."/>
            <person name="Koenig J."/>
            <person name="Macko L."/>
            <person name="Mendz G.L."/>
            <person name="Nyakatura G."/>
            <person name="Schauer D.B."/>
            <person name="Shen Z."/>
            <person name="Weber J."/>
            <person name="Frosch M."/>
            <person name="Fox J.G."/>
        </authorList>
    </citation>
    <scope>NUCLEOTIDE SEQUENCE [LARGE SCALE GENOMIC DNA]</scope>
    <source>
        <strain>ATCC 51449 / 3B1</strain>
    </source>
</reference>
<keyword id="KW-0028">Amino-acid biosynthesis</keyword>
<keyword id="KW-0057">Aromatic amino acid biosynthesis</keyword>
<keyword id="KW-0274">FAD</keyword>
<keyword id="KW-0285">Flavoprotein</keyword>
<keyword id="KW-0288">FMN</keyword>
<keyword id="KW-0456">Lyase</keyword>
<keyword id="KW-0521">NADP</keyword>
<keyword id="KW-1185">Reference proteome</keyword>
<name>AROC_HELHP</name>
<dbReference type="EC" id="4.2.3.5" evidence="1"/>
<dbReference type="EMBL" id="AE017125">
    <property type="protein sequence ID" value="AAP77297.1"/>
    <property type="molecule type" value="Genomic_DNA"/>
</dbReference>
<dbReference type="RefSeq" id="WP_011115542.1">
    <property type="nucleotide sequence ID" value="NC_004917.1"/>
</dbReference>
<dbReference type="SMR" id="Q7VIA8"/>
<dbReference type="STRING" id="235279.HH_0700"/>
<dbReference type="KEGG" id="hhe:HH_0700"/>
<dbReference type="eggNOG" id="COG0082">
    <property type="taxonomic scope" value="Bacteria"/>
</dbReference>
<dbReference type="HOGENOM" id="CLU_034547_0_2_7"/>
<dbReference type="OrthoDB" id="9771806at2"/>
<dbReference type="UniPathway" id="UPA00053">
    <property type="reaction ID" value="UER00090"/>
</dbReference>
<dbReference type="Proteomes" id="UP000002495">
    <property type="component" value="Chromosome"/>
</dbReference>
<dbReference type="GO" id="GO:0005829">
    <property type="term" value="C:cytosol"/>
    <property type="evidence" value="ECO:0007669"/>
    <property type="project" value="TreeGrafter"/>
</dbReference>
<dbReference type="GO" id="GO:0004107">
    <property type="term" value="F:chorismate synthase activity"/>
    <property type="evidence" value="ECO:0007669"/>
    <property type="project" value="UniProtKB-UniRule"/>
</dbReference>
<dbReference type="GO" id="GO:0010181">
    <property type="term" value="F:FMN binding"/>
    <property type="evidence" value="ECO:0007669"/>
    <property type="project" value="TreeGrafter"/>
</dbReference>
<dbReference type="GO" id="GO:0008652">
    <property type="term" value="P:amino acid biosynthetic process"/>
    <property type="evidence" value="ECO:0007669"/>
    <property type="project" value="UniProtKB-KW"/>
</dbReference>
<dbReference type="GO" id="GO:0009073">
    <property type="term" value="P:aromatic amino acid family biosynthetic process"/>
    <property type="evidence" value="ECO:0007669"/>
    <property type="project" value="UniProtKB-KW"/>
</dbReference>
<dbReference type="GO" id="GO:0009423">
    <property type="term" value="P:chorismate biosynthetic process"/>
    <property type="evidence" value="ECO:0007669"/>
    <property type="project" value="UniProtKB-UniRule"/>
</dbReference>
<dbReference type="CDD" id="cd07304">
    <property type="entry name" value="Chorismate_synthase"/>
    <property type="match status" value="1"/>
</dbReference>
<dbReference type="Gene3D" id="3.60.150.10">
    <property type="entry name" value="Chorismate synthase AroC"/>
    <property type="match status" value="1"/>
</dbReference>
<dbReference type="HAMAP" id="MF_00300">
    <property type="entry name" value="Chorismate_synth"/>
    <property type="match status" value="1"/>
</dbReference>
<dbReference type="InterPro" id="IPR000453">
    <property type="entry name" value="Chorismate_synth"/>
</dbReference>
<dbReference type="InterPro" id="IPR035904">
    <property type="entry name" value="Chorismate_synth_AroC_sf"/>
</dbReference>
<dbReference type="InterPro" id="IPR020541">
    <property type="entry name" value="Chorismate_synthase_CS"/>
</dbReference>
<dbReference type="NCBIfam" id="TIGR00033">
    <property type="entry name" value="aroC"/>
    <property type="match status" value="1"/>
</dbReference>
<dbReference type="NCBIfam" id="NF003793">
    <property type="entry name" value="PRK05382.1"/>
    <property type="match status" value="1"/>
</dbReference>
<dbReference type="PANTHER" id="PTHR21085">
    <property type="entry name" value="CHORISMATE SYNTHASE"/>
    <property type="match status" value="1"/>
</dbReference>
<dbReference type="PANTHER" id="PTHR21085:SF0">
    <property type="entry name" value="CHORISMATE SYNTHASE"/>
    <property type="match status" value="1"/>
</dbReference>
<dbReference type="Pfam" id="PF01264">
    <property type="entry name" value="Chorismate_synt"/>
    <property type="match status" value="1"/>
</dbReference>
<dbReference type="PIRSF" id="PIRSF001456">
    <property type="entry name" value="Chorismate_synth"/>
    <property type="match status" value="1"/>
</dbReference>
<dbReference type="SUPFAM" id="SSF103263">
    <property type="entry name" value="Chorismate synthase, AroC"/>
    <property type="match status" value="1"/>
</dbReference>
<dbReference type="PROSITE" id="PS00787">
    <property type="entry name" value="CHORISMATE_SYNTHASE_1"/>
    <property type="match status" value="1"/>
</dbReference>
<dbReference type="PROSITE" id="PS00788">
    <property type="entry name" value="CHORISMATE_SYNTHASE_2"/>
    <property type="match status" value="1"/>
</dbReference>
<organism>
    <name type="scientific">Helicobacter hepaticus (strain ATCC 51449 / 3B1)</name>
    <dbReference type="NCBI Taxonomy" id="235279"/>
    <lineage>
        <taxon>Bacteria</taxon>
        <taxon>Pseudomonadati</taxon>
        <taxon>Campylobacterota</taxon>
        <taxon>Epsilonproteobacteria</taxon>
        <taxon>Campylobacterales</taxon>
        <taxon>Helicobacteraceae</taxon>
        <taxon>Helicobacter</taxon>
    </lineage>
</organism>
<sequence>MNTFGKSFRVSTFGESHGEGIGCVIDGIPAGLHIDELFIESMMTRRAPGRNQYTTQRKESDKVQILSGVFEGLSTGTPIGMWIANTGTKSSDYANIKDIFRPGHADYTYFKKYGIRDYRGGGRSSARESVARVAAGAVAQMLLREFDINVQSGICSIGNITGKQYDFAYALKSEIYALDKECEESQKALIENAKRKHDSIGGSALIRVEGLPAGLGEPLYHRLDGALGEALMGLNAVKAVEIGDGIISCTQYGSEHNDQMDKNGFKSNHSGGILGGISNGNALLVKAHFKPTPSIFIPQETLDIHLQEQTCQIKGRHDPCVAVRGSIVAQAMVALVLADMLLLHATSQLCFLKKIYKQ</sequence>
<gene>
    <name evidence="1" type="primary">aroC</name>
    <name type="ordered locus">HH_0700</name>
</gene>
<protein>
    <recommendedName>
        <fullName evidence="1">Chorismate synthase</fullName>
        <shortName evidence="1">CS</shortName>
        <ecNumber evidence="1">4.2.3.5</ecNumber>
    </recommendedName>
    <alternativeName>
        <fullName evidence="1">5-enolpyruvylshikimate-3-phosphate phospholyase</fullName>
    </alternativeName>
</protein>
<evidence type="ECO:0000255" key="1">
    <source>
        <dbReference type="HAMAP-Rule" id="MF_00300"/>
    </source>
</evidence>
<accession>Q7VIA8</accession>
<comment type="function">
    <text evidence="1">Catalyzes the anti-1,4-elimination of the C-3 phosphate and the C-6 proR hydrogen from 5-enolpyruvylshikimate-3-phosphate (EPSP) to yield chorismate, which is the branch point compound that serves as the starting substrate for the three terminal pathways of aromatic amino acid biosynthesis. This reaction introduces a second double bond into the aromatic ring system.</text>
</comment>
<comment type="catalytic activity">
    <reaction evidence="1">
        <text>5-O-(1-carboxyvinyl)-3-phosphoshikimate = chorismate + phosphate</text>
        <dbReference type="Rhea" id="RHEA:21020"/>
        <dbReference type="ChEBI" id="CHEBI:29748"/>
        <dbReference type="ChEBI" id="CHEBI:43474"/>
        <dbReference type="ChEBI" id="CHEBI:57701"/>
        <dbReference type="EC" id="4.2.3.5"/>
    </reaction>
</comment>
<comment type="cofactor">
    <cofactor evidence="1">
        <name>FMNH2</name>
        <dbReference type="ChEBI" id="CHEBI:57618"/>
    </cofactor>
    <text evidence="1">Reduced FMN (FMNH(2)).</text>
</comment>
<comment type="pathway">
    <text evidence="1">Metabolic intermediate biosynthesis; chorismate biosynthesis; chorismate from D-erythrose 4-phosphate and phosphoenolpyruvate: step 7/7.</text>
</comment>
<comment type="subunit">
    <text evidence="1">Homotetramer.</text>
</comment>
<comment type="similarity">
    <text evidence="1">Belongs to the chorismate synthase family.</text>
</comment>
<feature type="chain" id="PRO_0000140595" description="Chorismate synthase">
    <location>
        <begin position="1"/>
        <end position="358"/>
    </location>
</feature>
<feature type="binding site" evidence="1">
    <location>
        <position position="46"/>
    </location>
    <ligand>
        <name>NADP(+)</name>
        <dbReference type="ChEBI" id="CHEBI:58349"/>
    </ligand>
</feature>
<feature type="binding site" evidence="1">
    <location>
        <begin position="123"/>
        <end position="125"/>
    </location>
    <ligand>
        <name>FMN</name>
        <dbReference type="ChEBI" id="CHEBI:58210"/>
    </ligand>
</feature>
<feature type="binding site" evidence="1">
    <location>
        <begin position="235"/>
        <end position="236"/>
    </location>
    <ligand>
        <name>FMN</name>
        <dbReference type="ChEBI" id="CHEBI:58210"/>
    </ligand>
</feature>
<feature type="binding site" evidence="1">
    <location>
        <position position="275"/>
    </location>
    <ligand>
        <name>FMN</name>
        <dbReference type="ChEBI" id="CHEBI:58210"/>
    </ligand>
</feature>
<feature type="binding site" evidence="1">
    <location>
        <begin position="290"/>
        <end position="294"/>
    </location>
    <ligand>
        <name>FMN</name>
        <dbReference type="ChEBI" id="CHEBI:58210"/>
    </ligand>
</feature>
<feature type="binding site" evidence="1">
    <location>
        <position position="316"/>
    </location>
    <ligand>
        <name>FMN</name>
        <dbReference type="ChEBI" id="CHEBI:58210"/>
    </ligand>
</feature>